<organism>
    <name type="scientific">Mus musculus</name>
    <name type="common">Mouse</name>
    <dbReference type="NCBI Taxonomy" id="10090"/>
    <lineage>
        <taxon>Eukaryota</taxon>
        <taxon>Metazoa</taxon>
        <taxon>Chordata</taxon>
        <taxon>Craniata</taxon>
        <taxon>Vertebrata</taxon>
        <taxon>Euteleostomi</taxon>
        <taxon>Mammalia</taxon>
        <taxon>Eutheria</taxon>
        <taxon>Euarchontoglires</taxon>
        <taxon>Glires</taxon>
        <taxon>Rodentia</taxon>
        <taxon>Myomorpha</taxon>
        <taxon>Muroidea</taxon>
        <taxon>Muridae</taxon>
        <taxon>Murinae</taxon>
        <taxon>Mus</taxon>
        <taxon>Mus</taxon>
    </lineage>
</organism>
<protein>
    <recommendedName>
        <fullName>NAD-dependent protein deacetylase sirtuin-7</fullName>
        <ecNumber evidence="3 7 12">2.3.1.286</ecNumber>
    </recommendedName>
    <alternativeName>
        <fullName>NAD-dependent protein deacylase sirtuin-7</fullName>
        <ecNumber evidence="11">2.3.1.-</ecNumber>
    </alternativeName>
    <alternativeName>
        <fullName>Regulatory protein SIR2 homolog 7</fullName>
    </alternativeName>
    <alternativeName>
        <fullName>SIR2-like protein 7</fullName>
    </alternativeName>
</protein>
<proteinExistence type="evidence at protein level"/>
<gene>
    <name evidence="15 17" type="primary">Sirt7</name>
    <name type="synonym">Sir2l7</name>
</gene>
<reference key="1">
    <citation type="submission" date="2003-03" db="EMBL/GenBank/DDBJ databases">
        <title>Mus musculus sirtuin 7 (silent mating type information regulation 2, homolog 7) mRNA.</title>
        <authorList>
            <person name="Poloumienko A."/>
            <person name="Bakovic M."/>
        </authorList>
    </citation>
    <scope>NUCLEOTIDE SEQUENCE [MRNA]</scope>
    <source>
        <strain>C57BL/6J</strain>
        <tissue>Embryonic carcinoma</tissue>
    </source>
</reference>
<reference key="2">
    <citation type="journal article" date="2009" name="PLoS Biol.">
        <title>Lineage-specific biology revealed by a finished genome assembly of the mouse.</title>
        <authorList>
            <person name="Church D.M."/>
            <person name="Goodstadt L."/>
            <person name="Hillier L.W."/>
            <person name="Zody M.C."/>
            <person name="Goldstein S."/>
            <person name="She X."/>
            <person name="Bult C.J."/>
            <person name="Agarwala R."/>
            <person name="Cherry J.L."/>
            <person name="DiCuccio M."/>
            <person name="Hlavina W."/>
            <person name="Kapustin Y."/>
            <person name="Meric P."/>
            <person name="Maglott D."/>
            <person name="Birtle Z."/>
            <person name="Marques A.C."/>
            <person name="Graves T."/>
            <person name="Zhou S."/>
            <person name="Teague B."/>
            <person name="Potamousis K."/>
            <person name="Churas C."/>
            <person name="Place M."/>
            <person name="Herschleb J."/>
            <person name="Runnheim R."/>
            <person name="Forrest D."/>
            <person name="Amos-Landgraf J."/>
            <person name="Schwartz D.C."/>
            <person name="Cheng Z."/>
            <person name="Lindblad-Toh K."/>
            <person name="Eichler E.E."/>
            <person name="Ponting C.P."/>
        </authorList>
    </citation>
    <scope>NUCLEOTIDE SEQUENCE [LARGE SCALE GENOMIC DNA]</scope>
    <source>
        <strain>C57BL/6J</strain>
    </source>
</reference>
<reference key="3">
    <citation type="journal article" date="2004" name="Genome Res.">
        <title>The status, quality, and expansion of the NIH full-length cDNA project: the Mammalian Gene Collection (MGC).</title>
        <authorList>
            <consortium name="The MGC Project Team"/>
        </authorList>
    </citation>
    <scope>NUCLEOTIDE SEQUENCE [LARGE SCALE MRNA] OF 2-402</scope>
    <source>
        <strain>FVB/N</strain>
        <tissue>Colon</tissue>
    </source>
</reference>
<reference key="4">
    <citation type="journal article" date="2006" name="Genes Dev.">
        <title>Mammalian Sir2 homolog SIRT7 is an activator of RNA polymerase I transcription.</title>
        <authorList>
            <person name="Ford E."/>
            <person name="Voit R."/>
            <person name="Liszt G."/>
            <person name="Magin C."/>
            <person name="Grummt I."/>
            <person name="Guarente L."/>
        </authorList>
    </citation>
    <scope>FUNCTION</scope>
    <scope>SUBCELLULAR LOCATION</scope>
    <scope>TISSUE SPECIFICITY</scope>
</reference>
<reference key="5">
    <citation type="journal article" date="2008" name="Circ. Res.">
        <title>Sirt7 increases stress resistance of cardiomyocytes and prevents apoptosis and inflammatory cardiomyopathy in mice.</title>
        <authorList>
            <person name="Vakhrusheva O."/>
            <person name="Smolka C."/>
            <person name="Gajawada P."/>
            <person name="Kostin S."/>
            <person name="Boettger T."/>
            <person name="Kubin T."/>
            <person name="Braun T."/>
            <person name="Bober E."/>
        </authorList>
    </citation>
    <scope>FUNCTION</scope>
    <scope>ACTIVE SITE</scope>
    <scope>DISRUPTION PHENOTYPE</scope>
    <scope>MUTAGENESIS OF HIS-188</scope>
</reference>
<reference key="6">
    <citation type="journal article" date="2014" name="Cell Metab.">
        <title>A SIRT7-dependent acetylation switch of GABPbeta1 controls mitochondrial function.</title>
        <authorList>
            <person name="Ryu D."/>
            <person name="Jo Y.S."/>
            <person name="Lo Sasso G."/>
            <person name="Stein S."/>
            <person name="Zhang H."/>
            <person name="Perino A."/>
            <person name="Lee J.U."/>
            <person name="Zeviani M."/>
            <person name="Romand R."/>
            <person name="Hottiger M.O."/>
            <person name="Schoonjans K."/>
            <person name="Auwerx J."/>
        </authorList>
    </citation>
    <scope>FUNCTION</scope>
    <scope>CATALYTIC ACTIVITY</scope>
    <scope>SUBCELLULAR LOCATION</scope>
    <scope>DISRUPTION PHENOTYPE</scope>
</reference>
<reference key="7">
    <citation type="journal article" date="2016" name="EMBO J.">
        <title>SIRT7 promotes genome integrity and modulates non-homologous end joining DNA repair.</title>
        <authorList>
            <person name="Vazquez B.N."/>
            <person name="Thackray J.K."/>
            <person name="Simonet N.G."/>
            <person name="Kane-Goldsmith N."/>
            <person name="Martinez-Redondo P."/>
            <person name="Nguyen T."/>
            <person name="Bunting S."/>
            <person name="Vaquero A."/>
            <person name="Tischfield J.A."/>
            <person name="Serrano L."/>
        </authorList>
    </citation>
    <scope>FUNCTION</scope>
    <scope>SUBCELLULAR LOCATION</scope>
    <scope>DISRUPTION PHENOTYPE</scope>
</reference>
<reference key="8">
    <citation type="journal article" date="2017" name="Biochem. Biophys. Res. Commun.">
        <title>Sirt7 stabilizes rDNA heterochromatin through recruitment of DNMT1 and Sirt1.</title>
        <authorList>
            <person name="Ianni A."/>
            <person name="Hoelper S."/>
            <person name="Krueger M."/>
            <person name="Braun T."/>
            <person name="Bober E."/>
        </authorList>
    </citation>
    <scope>FUNCTION</scope>
    <scope>INTERACTION WITH DNMT1 AND SIRT1</scope>
</reference>
<reference key="9">
    <citation type="journal article" date="2017" name="Proc. Natl. Acad. Sci. U.S.A.">
        <title>Sirt7 promotes adipogenesis in the mouse by inhibiting autocatalytic activation of Sirt1.</title>
        <authorList>
            <person name="Fang J."/>
            <person name="Ianni A."/>
            <person name="Smolka C."/>
            <person name="Vakhrusheva O."/>
            <person name="Nolte H."/>
            <person name="Krueger M."/>
            <person name="Wietelmann A."/>
            <person name="Simonet N.G."/>
            <person name="Adrian-Segarra J.M."/>
            <person name="Vaquero A."/>
            <person name="Braun T."/>
            <person name="Bober E."/>
        </authorList>
    </citation>
    <scope>FUNCTION</scope>
    <scope>INTERACTION WITH SIRT1</scope>
    <scope>MUTAGENESIS OF HIS-188</scope>
</reference>
<reference key="10">
    <citation type="journal article" date="2018" name="Nat. Commun.">
        <title>SIRT7 has a critical role in bone formation by regulating lysine acylation of SP7/Osterix.</title>
        <authorList>
            <person name="Fukuda M."/>
            <person name="Yoshizawa T."/>
            <person name="Karim M.F."/>
            <person name="Sobuz S.U."/>
            <person name="Korogi W."/>
            <person name="Kobayasi D."/>
            <person name="Okanishi H."/>
            <person name="Tasaki M."/>
            <person name="Ono K."/>
            <person name="Sawa T."/>
            <person name="Sato Y."/>
            <person name="Chirifu M."/>
            <person name="Masuda T."/>
            <person name="Nakamura T."/>
            <person name="Tanoue H."/>
            <person name="Nakashima K."/>
            <person name="Kobashigawa Y."/>
            <person name="Morioka H."/>
            <person name="Bober E."/>
            <person name="Ohtsuki S."/>
            <person name="Yamagata Y."/>
            <person name="Ando Y."/>
            <person name="Oike Y."/>
            <person name="Araki N."/>
            <person name="Takeda S."/>
            <person name="Mizuta H."/>
            <person name="Yamagata K."/>
        </authorList>
    </citation>
    <scope>FUNCTION</scope>
    <scope>CATALYTIC ACTIVITY</scope>
    <scope>DISRUPTION PHENOTYPE</scope>
    <scope>ACTIVE SITE</scope>
    <scope>MUTAGENESIS OF HIS-188</scope>
</reference>
<reference key="11">
    <citation type="journal article" date="2019" name="Biochim. Biophys. Acta">
        <title>SIRT7 regulates the nuclear export of NF-kappaB p65 by deacetylating Ran.</title>
        <authorList>
            <person name="Sobuz S.U."/>
            <person name="Sato Y."/>
            <person name="Yoshizawa T."/>
            <person name="Karim F."/>
            <person name="Ono K."/>
            <person name="Sawa T."/>
            <person name="Miyamoto Y."/>
            <person name="Oka M."/>
            <person name="Yamagata K."/>
        </authorList>
    </citation>
    <scope>FUNCTION</scope>
    <scope>MUTAGENESIS OF HIS-188</scope>
</reference>
<reference key="12">
    <citation type="journal article" date="2019" name="Chromosoma">
        <title>SIRT7 promotes chromosome synapsis during prophase I of female meiosis.</title>
        <authorList>
            <person name="Vazquez B.N."/>
            <person name="Blengini C.S."/>
            <person name="Hernandez Y."/>
            <person name="Serrano L."/>
            <person name="Schindler K."/>
        </authorList>
    </citation>
    <scope>FUNCTION</scope>
    <scope>DISRUPTION PHENOTYPE</scope>
</reference>
<reference key="13">
    <citation type="journal article" date="2019" name="Nucleic Acids Res.">
        <title>SIRT7 mediates L1 elements transcriptional repression and their association with the nuclear lamina.</title>
        <authorList>
            <person name="Vazquez B.N."/>
            <person name="Thackray J.K."/>
            <person name="Simonet N.G."/>
            <person name="Chahar S."/>
            <person name="Kane-Goldsmith N."/>
            <person name="Newkirk S.J."/>
            <person name="Lee S."/>
            <person name="Xing J."/>
            <person name="Verzi M.P."/>
            <person name="An W."/>
            <person name="Vaquero A."/>
            <person name="Tischfield J.A."/>
            <person name="Serrano L."/>
        </authorList>
    </citation>
    <scope>FUNCTION</scope>
    <scope>SUBCELLULAR LOCATION</scope>
</reference>
<keyword id="KW-0156">Chromatin regulator</keyword>
<keyword id="KW-0158">Chromosome</keyword>
<keyword id="KW-0963">Cytoplasm</keyword>
<keyword id="KW-0227">DNA damage</keyword>
<keyword id="KW-0234">DNA repair</keyword>
<keyword id="KW-0479">Metal-binding</keyword>
<keyword id="KW-0488">Methylation</keyword>
<keyword id="KW-0520">NAD</keyword>
<keyword id="KW-0539">Nucleus</keyword>
<keyword id="KW-0597">Phosphoprotein</keyword>
<keyword id="KW-1185">Reference proteome</keyword>
<keyword id="KW-0678">Repressor</keyword>
<keyword id="KW-0804">Transcription</keyword>
<keyword id="KW-0805">Transcription regulation</keyword>
<keyword id="KW-0808">Transferase</keyword>
<keyword id="KW-0832">Ubl conjugation</keyword>
<keyword id="KW-0862">Zinc</keyword>
<name>SIR7_MOUSE</name>
<evidence type="ECO:0000250" key="1">
    <source>
        <dbReference type="UniProtKB" id="Q9NRC8"/>
    </source>
</evidence>
<evidence type="ECO:0000250" key="2">
    <source>
        <dbReference type="UniProtKB" id="Q9NXA8"/>
    </source>
</evidence>
<evidence type="ECO:0000255" key="3">
    <source>
        <dbReference type="PROSITE-ProRule" id="PRU00236"/>
    </source>
</evidence>
<evidence type="ECO:0000256" key="4">
    <source>
        <dbReference type="SAM" id="MobiDB-lite"/>
    </source>
</evidence>
<evidence type="ECO:0000269" key="5">
    <source>
    </source>
</evidence>
<evidence type="ECO:0000269" key="6">
    <source>
    </source>
</evidence>
<evidence type="ECO:0000269" key="7">
    <source>
    </source>
</evidence>
<evidence type="ECO:0000269" key="8">
    <source>
    </source>
</evidence>
<evidence type="ECO:0000269" key="9">
    <source>
    </source>
</evidence>
<evidence type="ECO:0000269" key="10">
    <source>
    </source>
</evidence>
<evidence type="ECO:0000269" key="11">
    <source>
    </source>
</evidence>
<evidence type="ECO:0000269" key="12">
    <source>
    </source>
</evidence>
<evidence type="ECO:0000269" key="13">
    <source>
    </source>
</evidence>
<evidence type="ECO:0000269" key="14">
    <source>
    </source>
</evidence>
<evidence type="ECO:0000303" key="15">
    <source>
    </source>
</evidence>
<evidence type="ECO:0000305" key="16"/>
<evidence type="ECO:0000312" key="17">
    <source>
        <dbReference type="MGI" id="MGI:2385849"/>
    </source>
</evidence>
<comment type="function">
    <text evidence="1 5 6 7 8 9 10 11 12 13 14">NAD-dependent protein-lysine deacylase that can act both as a deacetylase or deacylase (desuccinylase, depropionylase and deglutarylase), depending on the context (PubMed:25200183, PubMed:30026585, PubMed:31075303). Also acts as a dedecanoylase (By similarity). Specifically mediates deacetylation of histone H3 at 'Lys-18' (H3K18Ac) (By similarity). In contrast to other histone deacetylases, displays strong preference for a specific histone mark, H3K18Ac, directly linked to control of gene expression (By similarity). H3K18Ac is mainly present around the transcription start site of genes and has been linked to activation of nuclear hormone receptors; SIRT7 thereby acts as a transcription repressor (By similarity). Moreover, H3K18 hypoacetylation has been reported as a marker of malignancy in various cancers and seems to maintain the transformed phenotype of cancer cells (By similarity). Also able to mediate deacetylation of histone H3 at 'Lys-36' (H3K36Ac) in the context of nucleosomes (By similarity). Also mediates deacetylation of non-histone proteins, such as ATM, CDK9, DDX21, DDB1, FBL, FKBP5/FKBP51, GABPB1, RAN, RRP9/U3-55K and POLR1E/PAF53 (By similarity). Enriched in nucleolus where it stimulates transcription activity of the RNA polymerase I complex (PubMed:16618798). Acts by mediating the deacetylation of the RNA polymerase I subunit POLR1E/PAF53, thereby promoting the association of RNA polymerase I with the rDNA promoter region and coding region (By similarity). In response to metabolic stress, SIRT7 is released from nucleoli leading to hyperacetylation of POLR1E/PAF53 and decreased RNA polymerase I transcription (By similarity). Required to restore the transcription of ribosomal RNA (rRNA) at the exit from mitosis (PubMed:16618798). Promotes pre-ribosomal RNA (pre-rRNA) cleavage at the 5'-terminal processing site by mediating deacetylation of RRP9/U3-55K, a core subunit of the U3 snoRNP complex (By similarity). Mediates 'Lys-37' deacetylation of Ran, thereby regulating the nuclear export of NF-kappa-B subunit RELA/p65 (PubMed:31075303). Acts as a regulator of DNA damage repair by mediating deacetylation of ATM during the late stages of DNA damage response, promoting ATM dephosphorylation and deactivation (By similarity). May also deacetylate p53/TP53 and promotes cell survival, however such data need additional confirmation (PubMed:18239138). Suppresses the activity of the DCX (DDB1-CUL4-X-box) E3 ubiquitin-protein ligase complexes by mediating deacetylation of DDB1, which prevents the interaction between DDB1 and CUL4 (CUL4A or CUL4B) (By similarity). Activates RNA polymerase II transcription by mediating deacetylation of CDK9, thereby promoting 'Ser-2' phosphorylation of the C-terminal domain (CTD) of RNA polymerase II (By similarity). Deacetylates FBL, promoting histone-glutamine methyltransferase activity of FBL (By similarity). Acts as a regulator of mitochondrial function by catalyzing deacetylation of GABPB1 (PubMed:25200183). Regulates Akt/AKT1 activity by mediating deacetylation of FKBP5/FKBP51 (By similarity). Required to prevent R-loop-associated DNA damage and transcription-associated genomic instability by mediating deacetylation and subsequent activation of DDX21, thereby overcoming R-loop-mediated stalling of RNA polymerases (By similarity). In addition to protein deacetylase activity, also acts as protein-lysine deacylase (By similarity). Acts as a protein depropionylase by mediating depropionylation of Osterix (SP7), thereby regulating bone formation by osteoblasts (PubMed:30026585). Acts as a histone deglutarylase by mediating deglutarylation of histone H4 on 'Lys-91' (H4K91glu); a mark that destabilizes nucleosomes by promoting dissociation of the H2A-H2B dimers from nucleosomes (By similarity). Acts as a histone desuccinylase: in response to DNA damage, recruited to DNA double-strand breaks (DSBs) and catalyzes desuccinylation of histone H3 on 'Lys-122' (H3K122succ), thereby promoting chromatin condensation and DSB repair (By similarity). Also promotes DSB repair by promoting H3K18Ac deacetylation, regulating non-homologous end joining (NHEJ) (PubMed:27225932). Along with its role in DNA repair, required for chromosome synapsis during prophase I of female meiosis by catalyzing H3K18Ac deacetylation (PubMed:31256246). Involved in transcriptional repression of LINE-1 retrotransposon via H3K18Ac deacetylation, and promotes their association with the nuclear lamina (PubMed:31226208). Required to stabilize ribosomal DNA (rDNA) heterochromatin and prevent cellular senescence induced by rDNA instability (PubMed:28842251). Acts as a negative regulator of SIRT1 by preventing autodeacetylation of SIRT1, restricting SIRT1 deacetylase activity (PubMed:28923965).</text>
</comment>
<comment type="catalytic activity">
    <reaction evidence="3 7 12">
        <text>N(6)-acetyl-L-lysyl-[protein] + NAD(+) + H2O = 2''-O-acetyl-ADP-D-ribose + nicotinamide + L-lysyl-[protein]</text>
        <dbReference type="Rhea" id="RHEA:43636"/>
        <dbReference type="Rhea" id="RHEA-COMP:9752"/>
        <dbReference type="Rhea" id="RHEA-COMP:10731"/>
        <dbReference type="ChEBI" id="CHEBI:15377"/>
        <dbReference type="ChEBI" id="CHEBI:17154"/>
        <dbReference type="ChEBI" id="CHEBI:29969"/>
        <dbReference type="ChEBI" id="CHEBI:57540"/>
        <dbReference type="ChEBI" id="CHEBI:61930"/>
        <dbReference type="ChEBI" id="CHEBI:83767"/>
        <dbReference type="EC" id="2.3.1.286"/>
    </reaction>
    <physiologicalReaction direction="left-to-right" evidence="7 12">
        <dbReference type="Rhea" id="RHEA:43637"/>
    </physiologicalReaction>
</comment>
<comment type="catalytic activity">
    <reaction evidence="1">
        <text>N(6)-glutaryl-L-lysyl-[protein] + NAD(+) + H2O = 2''-O-glutaryl-ADP-D-ribose + nicotinamide + L-lysyl-[protein]</text>
        <dbReference type="Rhea" id="RHEA:47664"/>
        <dbReference type="Rhea" id="RHEA-COMP:9752"/>
        <dbReference type="Rhea" id="RHEA-COMP:11875"/>
        <dbReference type="ChEBI" id="CHEBI:15377"/>
        <dbReference type="ChEBI" id="CHEBI:17154"/>
        <dbReference type="ChEBI" id="CHEBI:29969"/>
        <dbReference type="ChEBI" id="CHEBI:57540"/>
        <dbReference type="ChEBI" id="CHEBI:87828"/>
        <dbReference type="ChEBI" id="CHEBI:87829"/>
    </reaction>
    <physiologicalReaction direction="left-to-right" evidence="1">
        <dbReference type="Rhea" id="RHEA:47665"/>
    </physiologicalReaction>
</comment>
<comment type="catalytic activity">
    <reaction evidence="1">
        <text>N(6)-succinyl-L-lysyl-[protein] + NAD(+) + H2O = 2''-O-succinyl-ADP-D-ribose + nicotinamide + L-lysyl-[protein]</text>
        <dbReference type="Rhea" id="RHEA:47668"/>
        <dbReference type="Rhea" id="RHEA-COMP:9752"/>
        <dbReference type="Rhea" id="RHEA-COMP:11877"/>
        <dbReference type="ChEBI" id="CHEBI:15377"/>
        <dbReference type="ChEBI" id="CHEBI:17154"/>
        <dbReference type="ChEBI" id="CHEBI:29969"/>
        <dbReference type="ChEBI" id="CHEBI:57540"/>
        <dbReference type="ChEBI" id="CHEBI:87830"/>
        <dbReference type="ChEBI" id="CHEBI:87832"/>
    </reaction>
    <physiologicalReaction direction="left-to-right" evidence="1">
        <dbReference type="Rhea" id="RHEA:47669"/>
    </physiologicalReaction>
</comment>
<comment type="catalytic activity">
    <reaction evidence="11">
        <text>N(6)-propanoyl-L-lysyl-[protein] + NAD(+) + H2O = 3''-O-propanoyl-ADP-D-ribose + nicotinamide + L-lysyl-[protein]</text>
        <dbReference type="Rhea" id="RHEA:23500"/>
        <dbReference type="Rhea" id="RHEA-COMP:9752"/>
        <dbReference type="Rhea" id="RHEA-COMP:13758"/>
        <dbReference type="ChEBI" id="CHEBI:15377"/>
        <dbReference type="ChEBI" id="CHEBI:17154"/>
        <dbReference type="ChEBI" id="CHEBI:29969"/>
        <dbReference type="ChEBI" id="CHEBI:57540"/>
        <dbReference type="ChEBI" id="CHEBI:138019"/>
        <dbReference type="ChEBI" id="CHEBI:145015"/>
    </reaction>
    <physiologicalReaction direction="left-to-right" evidence="11">
        <dbReference type="Rhea" id="RHEA:23501"/>
    </physiologicalReaction>
</comment>
<comment type="catalytic activity">
    <reaction evidence="1">
        <text>N(6)-decanoyl-L-lysyl-[protein] + NAD(+) + H2O = 2''-O-decanoyl-ADP-D-ribose + nicotinamide + L-lysyl-[protein]</text>
        <dbReference type="Rhea" id="RHEA:70631"/>
        <dbReference type="Rhea" id="RHEA-COMP:9752"/>
        <dbReference type="Rhea" id="RHEA-COMP:17932"/>
        <dbReference type="ChEBI" id="CHEBI:15377"/>
        <dbReference type="ChEBI" id="CHEBI:17154"/>
        <dbReference type="ChEBI" id="CHEBI:29969"/>
        <dbReference type="ChEBI" id="CHEBI:57540"/>
        <dbReference type="ChEBI" id="CHEBI:143222"/>
        <dbReference type="ChEBI" id="CHEBI:189688"/>
    </reaction>
    <physiologicalReaction direction="left-to-right" evidence="1">
        <dbReference type="Rhea" id="RHEA:70632"/>
    </physiologicalReaction>
</comment>
<comment type="cofactor">
    <cofactor evidence="2">
        <name>Zn(2+)</name>
        <dbReference type="ChEBI" id="CHEBI:29105"/>
    </cofactor>
    <text evidence="2">Binds 1 zinc ion per subunit.</text>
</comment>
<comment type="activity regulation">
    <text evidence="1">NAD-dependent protein-lysine deacetylase and deacylase activities are activated by nucleic acids. Histone deacetylase activity is activated by DNA. Protein-lysine deacylase activity is activated by RNA. H3K18Ac histone deacetylase activity is inhibited by methylation at Arg-390. H3K18Ac histone deacetylase activity is inhibited by deubiquitination by USP7.</text>
</comment>
<comment type="subunit">
    <text evidence="1 9 10">Interacts with UBTF and the RNA polymerase I complex (By similarity). Interacts with components of the B-WICH complex, such as MYBBP1A, SMARCA5/SNF2H and BAZ1B/WSTF (By similarity). Interacts with ELK4, leading to stabilization at target promoters for H3K18Ac deacetylation (By similarity). Interacts with histone H2A and/or histone H2B (By similarity). Interacts with DNMT1 (PubMed:28842251). Interacts with SIRT1 (PubMed:28842251, PubMed:28923965).</text>
</comment>
<comment type="subcellular location">
    <subcellularLocation>
        <location evidence="5 7">Nucleus</location>
        <location evidence="5 7">Nucleolus</location>
    </subcellularLocation>
    <subcellularLocation>
        <location evidence="7">Nucleus</location>
        <location evidence="7">Nucleoplasm</location>
    </subcellularLocation>
    <subcellularLocation>
        <location evidence="8 13">Chromosome</location>
    </subcellularLocation>
    <subcellularLocation>
        <location evidence="1">Cytoplasm</location>
    </subcellularLocation>
    <text evidence="1 8">Mainly localizes in the nucleolus and nucleoplasm (By similarity). Associated with rDNA promoter and transcribed region (By similarity). Associated with nucleolar organizer regions during mitosis (By similarity). In response to stress, released from nucleolus to nucleoplasm (By similarity). Associated with chromatin (By similarity). In response to DNA damage, recruited to DNA double-strand breaks (DSBs) sites (PubMed:27225932). Located close to the nuclear membrane when in the cytoplasm (By similarity).</text>
</comment>
<comment type="tissue specificity">
    <text evidence="5">Detected in liver, spleen and testis (PubMed:16618798). Detected in embryos (PubMed:16618798).</text>
</comment>
<comment type="PTM">
    <text evidence="1">Phosphorylated during mitosis.</text>
</comment>
<comment type="PTM">
    <text evidence="1">Methylation at Arg-390 by PRMT6 inhibits the H3K18Ac histone deacetylase activity, promoting mitochondria biogenesis and maintaining mitochondria respiration.</text>
</comment>
<comment type="PTM">
    <text evidence="1">Ubiquitinated via 'Lys-63'-linked ubiquitin chains. Deubiquitinated by USP7, inhibiting the H3K18Ac histone deacetylase activity and regulating gluconeogenesis. Ubiquitinated by E3 ubiquitin-protein ligase complex containing FBXO7; leading to proteasomal degradation.</text>
</comment>
<comment type="disruption phenotype">
    <text evidence="6 7 8 11 14">Mice show a reduction in lifespan and develop heart hypertrophy (PubMed:18239138). The mean and maximum lifespan is reduced by 59% and 55% (PubMed:18239138). Mice develop kyphosis and lose subcutaneous fat early in life; they also show a general decrease in stress-resistance mechanisms (PubMed:18239138). Mice suffer from degenerative heart hypertrophy and inflammatory cardiomyopathy (PubMed:18239138). Hearts are also characterized by an extensive fibrosis (PubMed:18239138). Mice also display multisystemic mitochondrial dysfunction, characterized by increased blood lactate levels, reduced exercise performance, cardiac dysfunction, hepatic microvesicular steatosis and age-related hearing loss (PubMed:25200183). Cells show impaired oxidative phosphorylation (OxPhos) (PubMed:25200183). A substantial proportion of mice also show perinatal lethality and an accelerated aging phenotype, probably caused by increased replication stress and impaired DNA caused repair (PubMed:27225932). Females display reduced fertility and produce fewer oocytes and ovulate fewer eggs (PubMed:31256246). Oocytes show impaired meiotic progression with reduced levels of crossovers and chromosome synapsis defects (PubMed:31256246). Mice also show severe osteopenia characterized by decreased bone formation and an increase of osteoclasts (PubMed:30026585).</text>
</comment>
<comment type="similarity">
    <text evidence="16">Belongs to the sirtuin family. Class IV subfamily.</text>
</comment>
<comment type="sequence caution" evidence="16">
    <conflict type="erroneous initiation">
        <sequence resource="EMBL-CDS" id="AAH26403"/>
    </conflict>
</comment>
<comment type="sequence caution" evidence="16">
    <conflict type="erroneous initiation">
        <sequence resource="EMBL-CDS" id="AAH26650"/>
    </conflict>
</comment>
<dbReference type="EC" id="2.3.1.286" evidence="3 7 12"/>
<dbReference type="EC" id="2.3.1.-" evidence="11"/>
<dbReference type="EMBL" id="AY251540">
    <property type="protein sequence ID" value="AAP83960.1"/>
    <property type="molecule type" value="mRNA"/>
</dbReference>
<dbReference type="EMBL" id="AL663030">
    <property type="status" value="NOT_ANNOTATED_CDS"/>
    <property type="molecule type" value="Genomic_DNA"/>
</dbReference>
<dbReference type="EMBL" id="BC026403">
    <property type="protein sequence ID" value="AAH26403.1"/>
    <property type="status" value="ALT_INIT"/>
    <property type="molecule type" value="mRNA"/>
</dbReference>
<dbReference type="EMBL" id="BC026650">
    <property type="protein sequence ID" value="AAH26650.1"/>
    <property type="status" value="ALT_INIT"/>
    <property type="molecule type" value="mRNA"/>
</dbReference>
<dbReference type="CCDS" id="CCDS49006.1"/>
<dbReference type="RefSeq" id="NP_694696.2">
    <property type="nucleotide sequence ID" value="NM_153056.3"/>
</dbReference>
<dbReference type="SMR" id="Q8BKJ9"/>
<dbReference type="BioGRID" id="229037">
    <property type="interactions" value="5"/>
</dbReference>
<dbReference type="FunCoup" id="Q8BKJ9">
    <property type="interactions" value="1271"/>
</dbReference>
<dbReference type="IntAct" id="Q8BKJ9">
    <property type="interactions" value="1"/>
</dbReference>
<dbReference type="STRING" id="10090.ENSMUSP00000079093"/>
<dbReference type="iPTMnet" id="Q8BKJ9"/>
<dbReference type="PhosphoSitePlus" id="Q8BKJ9"/>
<dbReference type="jPOST" id="Q8BKJ9"/>
<dbReference type="PaxDb" id="10090-ENSMUSP00000079093"/>
<dbReference type="PeptideAtlas" id="Q8BKJ9"/>
<dbReference type="ProteomicsDB" id="261239"/>
<dbReference type="Antibodypedia" id="19848">
    <property type="antibodies" value="515 antibodies from 42 providers"/>
</dbReference>
<dbReference type="DNASU" id="209011"/>
<dbReference type="Ensembl" id="ENSMUST00000080202.12">
    <property type="protein sequence ID" value="ENSMUSP00000079093.6"/>
    <property type="gene ID" value="ENSMUSG00000025138.15"/>
</dbReference>
<dbReference type="GeneID" id="209011"/>
<dbReference type="KEGG" id="mmu:209011"/>
<dbReference type="UCSC" id="uc011yjf.1">
    <property type="organism name" value="mouse"/>
</dbReference>
<dbReference type="AGR" id="MGI:2385849"/>
<dbReference type="CTD" id="51547"/>
<dbReference type="MGI" id="MGI:2385849">
    <property type="gene designation" value="Sirt7"/>
</dbReference>
<dbReference type="VEuPathDB" id="HostDB:ENSMUSG00000025138"/>
<dbReference type="eggNOG" id="KOG1905">
    <property type="taxonomic scope" value="Eukaryota"/>
</dbReference>
<dbReference type="GeneTree" id="ENSGT00940000159703"/>
<dbReference type="HOGENOM" id="CLU_023643_6_2_1"/>
<dbReference type="InParanoid" id="Q8BKJ9"/>
<dbReference type="OMA" id="SNREYCK"/>
<dbReference type="OrthoDB" id="2919105at2759"/>
<dbReference type="PhylomeDB" id="Q8BKJ9"/>
<dbReference type="TreeFam" id="TF106184"/>
<dbReference type="BioGRID-ORCS" id="209011">
    <property type="hits" value="0 hits in 81 CRISPR screens"/>
</dbReference>
<dbReference type="ChiTaRS" id="Sirt7">
    <property type="organism name" value="mouse"/>
</dbReference>
<dbReference type="PRO" id="PR:Q8BKJ9"/>
<dbReference type="Proteomes" id="UP000000589">
    <property type="component" value="Chromosome 11"/>
</dbReference>
<dbReference type="RNAct" id="Q8BKJ9">
    <property type="molecule type" value="protein"/>
</dbReference>
<dbReference type="Bgee" id="ENSMUSG00000025138">
    <property type="expression patterns" value="Expressed in granulocyte and 255 other cell types or tissues"/>
</dbReference>
<dbReference type="ExpressionAtlas" id="Q8BKJ9">
    <property type="expression patterns" value="baseline and differential"/>
</dbReference>
<dbReference type="GO" id="GO:0000785">
    <property type="term" value="C:chromatin"/>
    <property type="evidence" value="ECO:0000314"/>
    <property type="project" value="UniProtKB"/>
</dbReference>
<dbReference type="GO" id="GO:0005737">
    <property type="term" value="C:cytoplasm"/>
    <property type="evidence" value="ECO:0007669"/>
    <property type="project" value="UniProtKB-SubCell"/>
</dbReference>
<dbReference type="GO" id="GO:0016607">
    <property type="term" value="C:nuclear speck"/>
    <property type="evidence" value="ECO:0007669"/>
    <property type="project" value="Ensembl"/>
</dbReference>
<dbReference type="GO" id="GO:0005730">
    <property type="term" value="C:nucleolus"/>
    <property type="evidence" value="ECO:0000250"/>
    <property type="project" value="UniProtKB"/>
</dbReference>
<dbReference type="GO" id="GO:0005731">
    <property type="term" value="C:nucleolus organizer region"/>
    <property type="evidence" value="ECO:0000250"/>
    <property type="project" value="UniProtKB"/>
</dbReference>
<dbReference type="GO" id="GO:0035861">
    <property type="term" value="C:site of double-strand break"/>
    <property type="evidence" value="ECO:0000315"/>
    <property type="project" value="UniProtKB"/>
</dbReference>
<dbReference type="GO" id="GO:0003682">
    <property type="term" value="F:chromatin binding"/>
    <property type="evidence" value="ECO:0000250"/>
    <property type="project" value="UniProtKB"/>
</dbReference>
<dbReference type="GO" id="GO:0097372">
    <property type="term" value="F:histone H3K18 deacetylase activity, NAD-dependent"/>
    <property type="evidence" value="ECO:0000315"/>
    <property type="project" value="UniProtKB"/>
</dbReference>
<dbReference type="GO" id="GO:0046872">
    <property type="term" value="F:metal ion binding"/>
    <property type="evidence" value="ECO:0007669"/>
    <property type="project" value="UniProtKB-KW"/>
</dbReference>
<dbReference type="GO" id="GO:0070403">
    <property type="term" value="F:NAD+ binding"/>
    <property type="evidence" value="ECO:0007669"/>
    <property type="project" value="InterPro"/>
</dbReference>
<dbReference type="GO" id="GO:0034979">
    <property type="term" value="F:NAD-dependent protein lysine deacetylase activity"/>
    <property type="evidence" value="ECO:0000314"/>
    <property type="project" value="UniProtKB"/>
</dbReference>
<dbReference type="GO" id="GO:0106231">
    <property type="term" value="F:NAD-dependent protein-lysine depropionylase activity"/>
    <property type="evidence" value="ECO:0000314"/>
    <property type="project" value="UniProtKB"/>
</dbReference>
<dbReference type="GO" id="GO:0008276">
    <property type="term" value="F:protein methyltransferase activity"/>
    <property type="evidence" value="ECO:0007669"/>
    <property type="project" value="Ensembl"/>
</dbReference>
<dbReference type="GO" id="GO:0061697">
    <property type="term" value="F:protein-glutaryllysine deglutarylase activity"/>
    <property type="evidence" value="ECO:0000250"/>
    <property type="project" value="UniProtKB"/>
</dbReference>
<dbReference type="GO" id="GO:0036055">
    <property type="term" value="F:protein-succinyllysine desuccinylase activity"/>
    <property type="evidence" value="ECO:0000250"/>
    <property type="project" value="UniProtKB"/>
</dbReference>
<dbReference type="GO" id="GO:0006281">
    <property type="term" value="P:DNA repair"/>
    <property type="evidence" value="ECO:0007669"/>
    <property type="project" value="UniProtKB-KW"/>
</dbReference>
<dbReference type="GO" id="GO:0140861">
    <property type="term" value="P:DNA repair-dependent chromatin remodeling"/>
    <property type="evidence" value="ECO:0000315"/>
    <property type="project" value="UniProtKB"/>
</dbReference>
<dbReference type="GO" id="GO:0007129">
    <property type="term" value="P:homologous chromosome pairing at meiosis"/>
    <property type="evidence" value="ECO:0000315"/>
    <property type="project" value="UniProtKB"/>
</dbReference>
<dbReference type="GO" id="GO:0045814">
    <property type="term" value="P:negative regulation of gene expression, epigenetic"/>
    <property type="evidence" value="ECO:0000315"/>
    <property type="project" value="UniProtKB"/>
</dbReference>
<dbReference type="GO" id="GO:0051898">
    <property type="term" value="P:negative regulation of phosphatidylinositol 3-kinase/protein kinase B signal transduction"/>
    <property type="evidence" value="ECO:0007669"/>
    <property type="project" value="Ensembl"/>
</dbReference>
<dbReference type="GO" id="GO:0031397">
    <property type="term" value="P:negative regulation of protein ubiquitination"/>
    <property type="evidence" value="ECO:0000250"/>
    <property type="project" value="UniProtKB"/>
</dbReference>
<dbReference type="GO" id="GO:0000122">
    <property type="term" value="P:negative regulation of transcription by RNA polymerase II"/>
    <property type="evidence" value="ECO:0000250"/>
    <property type="project" value="UniProtKB"/>
</dbReference>
<dbReference type="GO" id="GO:0001649">
    <property type="term" value="P:osteoblast differentiation"/>
    <property type="evidence" value="ECO:0000315"/>
    <property type="project" value="UniProtKB"/>
</dbReference>
<dbReference type="GO" id="GO:0045722">
    <property type="term" value="P:positive regulation of gluconeogenesis"/>
    <property type="evidence" value="ECO:0000250"/>
    <property type="project" value="UniProtKB"/>
</dbReference>
<dbReference type="GO" id="GO:2000234">
    <property type="term" value="P:positive regulation of rRNA processing"/>
    <property type="evidence" value="ECO:0000250"/>
    <property type="project" value="UniProtKB"/>
</dbReference>
<dbReference type="GO" id="GO:0045943">
    <property type="term" value="P:positive regulation of transcription by RNA polymerase I"/>
    <property type="evidence" value="ECO:0000250"/>
    <property type="project" value="UniProtKB"/>
</dbReference>
<dbReference type="GO" id="GO:0006476">
    <property type="term" value="P:protein deacetylation"/>
    <property type="evidence" value="ECO:0000314"/>
    <property type="project" value="UniProtKB"/>
</dbReference>
<dbReference type="GO" id="GO:0061698">
    <property type="term" value="P:protein deglutarylation"/>
    <property type="evidence" value="ECO:0000250"/>
    <property type="project" value="UniProtKB"/>
</dbReference>
<dbReference type="GO" id="GO:0106230">
    <property type="term" value="P:protein depropionylation"/>
    <property type="evidence" value="ECO:0000314"/>
    <property type="project" value="UniProtKB"/>
</dbReference>
<dbReference type="GO" id="GO:0062176">
    <property type="term" value="P:R-loop processing"/>
    <property type="evidence" value="ECO:0000250"/>
    <property type="project" value="UniProtKB"/>
</dbReference>
<dbReference type="GO" id="GO:0006282">
    <property type="term" value="P:regulation of DNA repair"/>
    <property type="evidence" value="ECO:0007669"/>
    <property type="project" value="Ensembl"/>
</dbReference>
<dbReference type="GO" id="GO:0010821">
    <property type="term" value="P:regulation of mitochondrion organization"/>
    <property type="evidence" value="ECO:0000315"/>
    <property type="project" value="UniProtKB"/>
</dbReference>
<dbReference type="GO" id="GO:0046825">
    <property type="term" value="P:regulation of protein export from nucleus"/>
    <property type="evidence" value="ECO:0000315"/>
    <property type="project" value="UniProtKB"/>
</dbReference>
<dbReference type="GO" id="GO:0006357">
    <property type="term" value="P:regulation of transcription by RNA polymerase II"/>
    <property type="evidence" value="ECO:0000250"/>
    <property type="project" value="UniProtKB"/>
</dbReference>
<dbReference type="GO" id="GO:1901836">
    <property type="term" value="P:regulation of transcription of nucleolar large rRNA by RNA polymerase I"/>
    <property type="evidence" value="ECO:0000250"/>
    <property type="project" value="UniProtKB"/>
</dbReference>
<dbReference type="GO" id="GO:0009303">
    <property type="term" value="P:rRNA transcription"/>
    <property type="evidence" value="ECO:0000250"/>
    <property type="project" value="UniProtKB"/>
</dbReference>
<dbReference type="GO" id="GO:0045815">
    <property type="term" value="P:transcription initiation-coupled chromatin remodeling"/>
    <property type="evidence" value="ECO:0007669"/>
    <property type="project" value="Ensembl"/>
</dbReference>
<dbReference type="GO" id="GO:0010526">
    <property type="term" value="P:transposable element silencing"/>
    <property type="evidence" value="ECO:0000315"/>
    <property type="project" value="UniProtKB"/>
</dbReference>
<dbReference type="CDD" id="cd01410">
    <property type="entry name" value="SIRT7"/>
    <property type="match status" value="1"/>
</dbReference>
<dbReference type="FunFam" id="2.20.28.200:FF:000002">
    <property type="entry name" value="NAD-dependent deacetylase sirtuin-7"/>
    <property type="match status" value="1"/>
</dbReference>
<dbReference type="FunFam" id="3.40.50.1220:FF:000038">
    <property type="entry name" value="NAD-dependent protein deacetylase sirtuin-6 isoform X2"/>
    <property type="match status" value="1"/>
</dbReference>
<dbReference type="Gene3D" id="2.20.28.200">
    <property type="match status" value="1"/>
</dbReference>
<dbReference type="Gene3D" id="3.40.50.1220">
    <property type="entry name" value="TPP-binding domain"/>
    <property type="match status" value="1"/>
</dbReference>
<dbReference type="InterPro" id="IPR029035">
    <property type="entry name" value="DHS-like_NAD/FAD-binding_dom"/>
</dbReference>
<dbReference type="InterPro" id="IPR050134">
    <property type="entry name" value="NAD-dep_sirtuin_deacylases"/>
</dbReference>
<dbReference type="InterPro" id="IPR003000">
    <property type="entry name" value="Sirtuin"/>
</dbReference>
<dbReference type="InterPro" id="IPR026590">
    <property type="entry name" value="Ssirtuin_cat_dom"/>
</dbReference>
<dbReference type="PANTHER" id="PTHR11085:SF1">
    <property type="entry name" value="NAD-DEPENDENT PROTEIN DEACETYLASE SIRTUIN-7"/>
    <property type="match status" value="1"/>
</dbReference>
<dbReference type="PANTHER" id="PTHR11085">
    <property type="entry name" value="NAD-DEPENDENT PROTEIN DEACYLASE SIRTUIN-5, MITOCHONDRIAL-RELATED"/>
    <property type="match status" value="1"/>
</dbReference>
<dbReference type="Pfam" id="PF02146">
    <property type="entry name" value="SIR2"/>
    <property type="match status" value="1"/>
</dbReference>
<dbReference type="SUPFAM" id="SSF52467">
    <property type="entry name" value="DHS-like NAD/FAD-binding domain"/>
    <property type="match status" value="1"/>
</dbReference>
<dbReference type="PROSITE" id="PS50305">
    <property type="entry name" value="SIRTUIN"/>
    <property type="match status" value="1"/>
</dbReference>
<accession>Q8BKJ9</accession>
<accession>A2ABY7</accession>
<accession>Q6X7B7</accession>
<accession>Q8QZZ5</accession>
<feature type="chain" id="PRO_0000110272" description="NAD-dependent protein deacetylase sirtuin-7">
    <location>
        <begin position="1"/>
        <end position="402"/>
    </location>
</feature>
<feature type="domain" description="Deacetylase sirtuin-type" evidence="3">
    <location>
        <begin position="83"/>
        <end position="330"/>
    </location>
</feature>
<feature type="region of interest" description="Disordered" evidence="4">
    <location>
        <begin position="1"/>
        <end position="23"/>
    </location>
</feature>
<feature type="region of interest" description="Disordered" evidence="4">
    <location>
        <begin position="355"/>
        <end position="402"/>
    </location>
</feature>
<feature type="compositionally biased region" description="Basic and acidic residues" evidence="4">
    <location>
        <begin position="9"/>
        <end position="23"/>
    </location>
</feature>
<feature type="compositionally biased region" description="Basic residues" evidence="4">
    <location>
        <begin position="392"/>
        <end position="402"/>
    </location>
</feature>
<feature type="active site" description="Proton acceptor" evidence="3 6 11">
    <location>
        <position position="188"/>
    </location>
</feature>
<feature type="binding site" evidence="2">
    <location>
        <begin position="108"/>
        <end position="127"/>
    </location>
    <ligand>
        <name>NAD(+)</name>
        <dbReference type="ChEBI" id="CHEBI:57540"/>
    </ligand>
</feature>
<feature type="binding site" evidence="2">
    <location>
        <begin position="168"/>
        <end position="171"/>
    </location>
    <ligand>
        <name>NAD(+)</name>
        <dbReference type="ChEBI" id="CHEBI:57540"/>
    </ligand>
</feature>
<feature type="binding site" evidence="3">
    <location>
        <position position="196"/>
    </location>
    <ligand>
        <name>Zn(2+)</name>
        <dbReference type="ChEBI" id="CHEBI:29105"/>
    </ligand>
</feature>
<feature type="binding site" evidence="3">
    <location>
        <position position="199"/>
    </location>
    <ligand>
        <name>Zn(2+)</name>
        <dbReference type="ChEBI" id="CHEBI:29105"/>
    </ligand>
</feature>
<feature type="binding site" evidence="3">
    <location>
        <position position="226"/>
    </location>
    <ligand>
        <name>Zn(2+)</name>
        <dbReference type="ChEBI" id="CHEBI:29105"/>
    </ligand>
</feature>
<feature type="binding site" evidence="3">
    <location>
        <position position="229"/>
    </location>
    <ligand>
        <name>Zn(2+)</name>
        <dbReference type="ChEBI" id="CHEBI:29105"/>
    </ligand>
</feature>
<feature type="binding site" evidence="2">
    <location>
        <begin position="269"/>
        <end position="271"/>
    </location>
    <ligand>
        <name>NAD(+)</name>
        <dbReference type="ChEBI" id="CHEBI:57540"/>
    </ligand>
</feature>
<feature type="binding site" evidence="2">
    <location>
        <begin position="298"/>
        <end position="300"/>
    </location>
    <ligand>
        <name>NAD(+)</name>
        <dbReference type="ChEBI" id="CHEBI:57540"/>
    </ligand>
</feature>
<feature type="binding site" evidence="2">
    <location>
        <position position="316"/>
    </location>
    <ligand>
        <name>NAD(+)</name>
        <dbReference type="ChEBI" id="CHEBI:57540"/>
    </ligand>
</feature>
<feature type="modified residue" description="Asymmetric dimethylarginine; alternate" evidence="1">
    <location>
        <position position="390"/>
    </location>
</feature>
<feature type="modified residue" description="Omega-N-methylarginine; alternate" evidence="1">
    <location>
        <position position="390"/>
    </location>
</feature>
<feature type="mutagenesis site" description="Abolishes deacylase and deacetylase activities. Reduced interaction with SIRT1, without abolishing it." evidence="6 10 11 12">
    <original>H</original>
    <variation>Y</variation>
    <location>
        <position position="188"/>
    </location>
</feature>
<feature type="sequence conflict" description="In Ref. 1; AAP83960." evidence="16" ref="1">
    <original>G</original>
    <variation>R</variation>
    <location>
        <position position="95"/>
    </location>
</feature>
<feature type="sequence conflict" description="In Ref. 1; AAP83960." evidence="16" ref="1">
    <original>M</original>
    <variation>I</variation>
    <location>
        <position position="320"/>
    </location>
</feature>
<feature type="sequence conflict" description="In Ref. 1; AAP83960." evidence="16" ref="1">
    <original>N</original>
    <variation>S</variation>
    <location>
        <position position="335"/>
    </location>
</feature>
<sequence>MAAGGGLSRSERKAAERVRRLREEQQRERLRQVSRILRKAAAERSAEEGRLLAESEDLVTELQGRSRRREGLKRRQEEVCDDPEELRRKVRELAGAVRSARHLVVYTGAGISTAASIPDYRGPNGVWTLLQKGRPVSAADLSEAEPTLTHMSITRLHEQKLVQHVVSQNCDGLHLRSGLPRTAISELHGNMYIEVCTSCIPNREYVRVFDVTERTALHRHLTGRTCHKCGTQLRDTIVHFGERGTLGQPLNWEAATEAASKADTILCLGSSLKVLKKYPRLWCMTKPPSRRPKLYIVNLQWTPKDDWAALKLHGKCDDVMQLLMNELGLEIPVYNRWQDPIFSLATPLRAGEEGSHSRKSLCRSREEAPPGDQSDPLASAPPILGGWFGRGCAKRAKRKKVA</sequence>